<organism>
    <name type="scientific">Mycolicibacterium vanbaalenii (strain DSM 7251 / JCM 13017 / BCRC 16820 / KCTC 9966 / NRRL B-24157 / PYR-1)</name>
    <name type="common">Mycobacterium vanbaalenii</name>
    <dbReference type="NCBI Taxonomy" id="350058"/>
    <lineage>
        <taxon>Bacteria</taxon>
        <taxon>Bacillati</taxon>
        <taxon>Actinomycetota</taxon>
        <taxon>Actinomycetes</taxon>
        <taxon>Mycobacteriales</taxon>
        <taxon>Mycobacteriaceae</taxon>
        <taxon>Mycolicibacterium</taxon>
    </lineage>
</organism>
<feature type="chain" id="PRO_0000308861" description="DNA-directed RNA polymerase subunit beta'">
    <location>
        <begin position="1"/>
        <end position="1317"/>
    </location>
</feature>
<feature type="region of interest" description="Disordered" evidence="2">
    <location>
        <begin position="183"/>
        <end position="209"/>
    </location>
</feature>
<feature type="binding site" evidence="1">
    <location>
        <position position="60"/>
    </location>
    <ligand>
        <name>Zn(2+)</name>
        <dbReference type="ChEBI" id="CHEBI:29105"/>
        <label>1</label>
    </ligand>
</feature>
<feature type="binding site" evidence="1">
    <location>
        <position position="62"/>
    </location>
    <ligand>
        <name>Zn(2+)</name>
        <dbReference type="ChEBI" id="CHEBI:29105"/>
        <label>1</label>
    </ligand>
</feature>
<feature type="binding site" evidence="1">
    <location>
        <position position="75"/>
    </location>
    <ligand>
        <name>Zn(2+)</name>
        <dbReference type="ChEBI" id="CHEBI:29105"/>
        <label>1</label>
    </ligand>
</feature>
<feature type="binding site" evidence="1">
    <location>
        <position position="78"/>
    </location>
    <ligand>
        <name>Zn(2+)</name>
        <dbReference type="ChEBI" id="CHEBI:29105"/>
        <label>1</label>
    </ligand>
</feature>
<feature type="binding site" evidence="1">
    <location>
        <position position="535"/>
    </location>
    <ligand>
        <name>Mg(2+)</name>
        <dbReference type="ChEBI" id="CHEBI:18420"/>
    </ligand>
</feature>
<feature type="binding site" evidence="1">
    <location>
        <position position="537"/>
    </location>
    <ligand>
        <name>Mg(2+)</name>
        <dbReference type="ChEBI" id="CHEBI:18420"/>
    </ligand>
</feature>
<feature type="binding site" evidence="1">
    <location>
        <position position="539"/>
    </location>
    <ligand>
        <name>Mg(2+)</name>
        <dbReference type="ChEBI" id="CHEBI:18420"/>
    </ligand>
</feature>
<feature type="binding site" evidence="1">
    <location>
        <position position="890"/>
    </location>
    <ligand>
        <name>Zn(2+)</name>
        <dbReference type="ChEBI" id="CHEBI:29105"/>
        <label>2</label>
    </ligand>
</feature>
<feature type="binding site" evidence="1">
    <location>
        <position position="967"/>
    </location>
    <ligand>
        <name>Zn(2+)</name>
        <dbReference type="ChEBI" id="CHEBI:29105"/>
        <label>2</label>
    </ligand>
</feature>
<feature type="binding site" evidence="1">
    <location>
        <position position="974"/>
    </location>
    <ligand>
        <name>Zn(2+)</name>
        <dbReference type="ChEBI" id="CHEBI:29105"/>
        <label>2</label>
    </ligand>
</feature>
<feature type="binding site" evidence="1">
    <location>
        <position position="977"/>
    </location>
    <ligand>
        <name>Zn(2+)</name>
        <dbReference type="ChEBI" id="CHEBI:29105"/>
        <label>2</label>
    </ligand>
</feature>
<dbReference type="EC" id="2.7.7.6" evidence="1"/>
<dbReference type="EMBL" id="CP000511">
    <property type="protein sequence ID" value="ABM12093.1"/>
    <property type="molecule type" value="Genomic_DNA"/>
</dbReference>
<dbReference type="RefSeq" id="WP_011778526.1">
    <property type="nucleotide sequence ID" value="NC_008726.1"/>
</dbReference>
<dbReference type="SMR" id="A1T4J3"/>
<dbReference type="STRING" id="350058.Mvan_1258"/>
<dbReference type="KEGG" id="mva:Mvan_1258"/>
<dbReference type="eggNOG" id="COG0086">
    <property type="taxonomic scope" value="Bacteria"/>
</dbReference>
<dbReference type="HOGENOM" id="CLU_000524_3_1_11"/>
<dbReference type="Proteomes" id="UP000009159">
    <property type="component" value="Chromosome"/>
</dbReference>
<dbReference type="GO" id="GO:0000428">
    <property type="term" value="C:DNA-directed RNA polymerase complex"/>
    <property type="evidence" value="ECO:0007669"/>
    <property type="project" value="UniProtKB-KW"/>
</dbReference>
<dbReference type="GO" id="GO:0003677">
    <property type="term" value="F:DNA binding"/>
    <property type="evidence" value="ECO:0007669"/>
    <property type="project" value="UniProtKB-UniRule"/>
</dbReference>
<dbReference type="GO" id="GO:0003899">
    <property type="term" value="F:DNA-directed RNA polymerase activity"/>
    <property type="evidence" value="ECO:0007669"/>
    <property type="project" value="UniProtKB-UniRule"/>
</dbReference>
<dbReference type="GO" id="GO:0000287">
    <property type="term" value="F:magnesium ion binding"/>
    <property type="evidence" value="ECO:0007669"/>
    <property type="project" value="UniProtKB-UniRule"/>
</dbReference>
<dbReference type="GO" id="GO:0008270">
    <property type="term" value="F:zinc ion binding"/>
    <property type="evidence" value="ECO:0007669"/>
    <property type="project" value="UniProtKB-UniRule"/>
</dbReference>
<dbReference type="GO" id="GO:0006351">
    <property type="term" value="P:DNA-templated transcription"/>
    <property type="evidence" value="ECO:0007669"/>
    <property type="project" value="UniProtKB-UniRule"/>
</dbReference>
<dbReference type="CDD" id="cd02655">
    <property type="entry name" value="RNAP_beta'_C"/>
    <property type="match status" value="1"/>
</dbReference>
<dbReference type="CDD" id="cd01609">
    <property type="entry name" value="RNAP_beta'_N"/>
    <property type="match status" value="1"/>
</dbReference>
<dbReference type="FunFam" id="1.10.150.390:FF:000002">
    <property type="entry name" value="DNA-directed RNA polymerase subunit beta"/>
    <property type="match status" value="1"/>
</dbReference>
<dbReference type="FunFam" id="1.10.40.90:FF:000001">
    <property type="entry name" value="DNA-directed RNA polymerase subunit beta"/>
    <property type="match status" value="1"/>
</dbReference>
<dbReference type="FunFam" id="4.10.860.120:FF:000001">
    <property type="entry name" value="DNA-directed RNA polymerase subunit beta"/>
    <property type="match status" value="1"/>
</dbReference>
<dbReference type="Gene3D" id="1.10.132.30">
    <property type="match status" value="1"/>
</dbReference>
<dbReference type="Gene3D" id="1.10.150.390">
    <property type="match status" value="1"/>
</dbReference>
<dbReference type="Gene3D" id="1.10.1790.20">
    <property type="match status" value="1"/>
</dbReference>
<dbReference type="Gene3D" id="1.10.40.90">
    <property type="match status" value="1"/>
</dbReference>
<dbReference type="Gene3D" id="2.40.40.20">
    <property type="match status" value="1"/>
</dbReference>
<dbReference type="Gene3D" id="2.40.50.100">
    <property type="match status" value="1"/>
</dbReference>
<dbReference type="Gene3D" id="4.10.860.120">
    <property type="entry name" value="RNA polymerase II, clamp domain"/>
    <property type="match status" value="1"/>
</dbReference>
<dbReference type="Gene3D" id="1.10.274.100">
    <property type="entry name" value="RNA polymerase Rpb1, domain 3"/>
    <property type="match status" value="1"/>
</dbReference>
<dbReference type="HAMAP" id="MF_01322">
    <property type="entry name" value="RNApol_bact_RpoC"/>
    <property type="match status" value="1"/>
</dbReference>
<dbReference type="InterPro" id="IPR045867">
    <property type="entry name" value="DNA-dir_RpoC_beta_prime"/>
</dbReference>
<dbReference type="InterPro" id="IPR012754">
    <property type="entry name" value="DNA-dir_RpoC_beta_prime_bact"/>
</dbReference>
<dbReference type="InterPro" id="IPR000722">
    <property type="entry name" value="RNA_pol_asu"/>
</dbReference>
<dbReference type="InterPro" id="IPR006592">
    <property type="entry name" value="RNA_pol_N"/>
</dbReference>
<dbReference type="InterPro" id="IPR007080">
    <property type="entry name" value="RNA_pol_Rpb1_1"/>
</dbReference>
<dbReference type="InterPro" id="IPR007066">
    <property type="entry name" value="RNA_pol_Rpb1_3"/>
</dbReference>
<dbReference type="InterPro" id="IPR042102">
    <property type="entry name" value="RNA_pol_Rpb1_3_sf"/>
</dbReference>
<dbReference type="InterPro" id="IPR007083">
    <property type="entry name" value="RNA_pol_Rpb1_4"/>
</dbReference>
<dbReference type="InterPro" id="IPR007081">
    <property type="entry name" value="RNA_pol_Rpb1_5"/>
</dbReference>
<dbReference type="InterPro" id="IPR044893">
    <property type="entry name" value="RNA_pol_Rpb1_clamp_domain"/>
</dbReference>
<dbReference type="InterPro" id="IPR038120">
    <property type="entry name" value="Rpb1_funnel_sf"/>
</dbReference>
<dbReference type="NCBIfam" id="NF011498">
    <property type="entry name" value="PRK14906.1"/>
    <property type="match status" value="1"/>
</dbReference>
<dbReference type="NCBIfam" id="TIGR02386">
    <property type="entry name" value="rpoC_TIGR"/>
    <property type="match status" value="1"/>
</dbReference>
<dbReference type="PANTHER" id="PTHR19376">
    <property type="entry name" value="DNA-DIRECTED RNA POLYMERASE"/>
    <property type="match status" value="1"/>
</dbReference>
<dbReference type="PANTHER" id="PTHR19376:SF54">
    <property type="entry name" value="DNA-DIRECTED RNA POLYMERASE SUBUNIT BETA"/>
    <property type="match status" value="1"/>
</dbReference>
<dbReference type="Pfam" id="PF04997">
    <property type="entry name" value="RNA_pol_Rpb1_1"/>
    <property type="match status" value="1"/>
</dbReference>
<dbReference type="Pfam" id="PF00623">
    <property type="entry name" value="RNA_pol_Rpb1_2"/>
    <property type="match status" value="1"/>
</dbReference>
<dbReference type="Pfam" id="PF04983">
    <property type="entry name" value="RNA_pol_Rpb1_3"/>
    <property type="match status" value="1"/>
</dbReference>
<dbReference type="Pfam" id="PF05000">
    <property type="entry name" value="RNA_pol_Rpb1_4"/>
    <property type="match status" value="1"/>
</dbReference>
<dbReference type="Pfam" id="PF04998">
    <property type="entry name" value="RNA_pol_Rpb1_5"/>
    <property type="match status" value="1"/>
</dbReference>
<dbReference type="SMART" id="SM00663">
    <property type="entry name" value="RPOLA_N"/>
    <property type="match status" value="1"/>
</dbReference>
<dbReference type="SUPFAM" id="SSF64484">
    <property type="entry name" value="beta and beta-prime subunits of DNA dependent RNA-polymerase"/>
    <property type="match status" value="1"/>
</dbReference>
<gene>
    <name evidence="1" type="primary">rpoC</name>
    <name type="ordered locus">Mvan_1258</name>
</gene>
<reference key="1">
    <citation type="submission" date="2006-12" db="EMBL/GenBank/DDBJ databases">
        <title>Complete sequence of Mycobacterium vanbaalenii PYR-1.</title>
        <authorList>
            <consortium name="US DOE Joint Genome Institute"/>
            <person name="Copeland A."/>
            <person name="Lucas S."/>
            <person name="Lapidus A."/>
            <person name="Barry K."/>
            <person name="Detter J.C."/>
            <person name="Glavina del Rio T."/>
            <person name="Hammon N."/>
            <person name="Israni S."/>
            <person name="Dalin E."/>
            <person name="Tice H."/>
            <person name="Pitluck S."/>
            <person name="Singan V."/>
            <person name="Schmutz J."/>
            <person name="Larimer F."/>
            <person name="Land M."/>
            <person name="Hauser L."/>
            <person name="Kyrpides N."/>
            <person name="Anderson I.J."/>
            <person name="Miller C."/>
            <person name="Richardson P."/>
        </authorList>
    </citation>
    <scope>NUCLEOTIDE SEQUENCE [LARGE SCALE GENOMIC DNA]</scope>
    <source>
        <strain>DSM 7251 / JCM 13017 / BCRC 16820 / KCTC 9966 / NRRL B-24157 / PYR-1</strain>
    </source>
</reference>
<name>RPOC_MYCVP</name>
<sequence length="1317" mass="147144">MLDVNFFDELRIGLATADDIRNWSFGEVKKPETINYRTLKPEKDGLFCEKIFGPTRDWECYCGKYKRVRFKGIICERCGVEVTRAKVRRERMGHIELAAPVTHIWYFKGVPSRLGYLLDLAPKDLEKIIYFAAYVITAVDDEMRHNELSTLEAEMAVERKAIEDQRDADLEARAQKLEADMKELEDEGAKSDVKRKVRDGGEREMRQLRDRAQRELDRLEEIWTTFTKLAPKQLIVDELLYRELQDRYGEYFEGAMGAESIKKLIENFDIDAEAESLRDTIKNGKGQKKLRALKRLKVVAAFQTNRNSPMGMVLDAVPVIPPELRPMVQLDGGRFATSDLNDLYRRVINRNNRLKRLIDLGAPEIIVNNEKRMLQESVDALFDNGRRGRPVTGPGNRPLKSLSDLLKGKQGRFRQNLLGKRVDYSGRSVIVVGPQLKLHQCGLPKLMALELFKPFVMKRLVDLNHAQNIKSAKRMVERQRPQVWDVLEEVIAEHPVLLNRAPTLHRLGIQAFEPQLVEGKAIQLHPLVCEAFNADFDGDQMAVHLPLSAEAQAEARILMLSSNNILSPASGRPLAMPRLDMVTGLYFLTTEIEGDTGEFTPAAKDQPESGVYSSPAEAIMALDRGALSVRAKIRVRLTQLRPPAEIEAERFPDGWNMGDAWTAETTLGRVLFNELLPRGYPFVNKQMHKKVQAAIINDLAERYPMIVVAQTVDKLKDAGFYWATRSGVTVSMADVLVPPEKQEILERYEAEADSIEKQYQRGKLNKDERNEALVKIWQDATEEVGQALRSHYPKDNPIITIVDSGATGNFTQTRTLAGMKGLVTNPKGEFIPRPIKSSFREGLTVLEYFINTHGARKGLADTALRTADSGYLTRRLVDVSQDVIVRETDCETERGITVTLAEKQADGTLVRDQHIETSAYARTLATDAVDAKGNVIVERGHDLGDPAIDALLAAGITEVKVRSVLTCGTGTGVCAMCYGRSMATGKLVDIGEAVGIVAAQSIGEPGTQLTMRTFHQGGVTGGADIVGGLPRVQELFEARIPRNRAPIADVSGRIRLEESDKFYKITIVPDDGGEEVVYDKLSRRQRLKVFKHDDGSERLLTDGDHVEVGQQLLEGSADPHEVLRVQGPREVQIHLVKEVQEVYRAQGVSIHDKHIEVIVRQMLRRVTIIDSGATEFLPGSLTERGEFETENRRVVAEGGEPAAGRPVLMGITKASLATDSWLSAASFQETTRVLTDAAINCRSDKLQGLKENVIIGKLIPAGTGINRYRNIQVQPTEEARAAAYTIPSYEDQYYSPDFGQATGAAVPLDDYGYSDYR</sequence>
<evidence type="ECO:0000255" key="1">
    <source>
        <dbReference type="HAMAP-Rule" id="MF_01322"/>
    </source>
</evidence>
<evidence type="ECO:0000256" key="2">
    <source>
        <dbReference type="SAM" id="MobiDB-lite"/>
    </source>
</evidence>
<proteinExistence type="inferred from homology"/>
<accession>A1T4J3</accession>
<protein>
    <recommendedName>
        <fullName evidence="1">DNA-directed RNA polymerase subunit beta'</fullName>
        <shortName evidence="1">RNAP subunit beta'</shortName>
        <ecNumber evidence="1">2.7.7.6</ecNumber>
    </recommendedName>
    <alternativeName>
        <fullName evidence="1">RNA polymerase subunit beta'</fullName>
    </alternativeName>
    <alternativeName>
        <fullName evidence="1">Transcriptase subunit beta'</fullName>
    </alternativeName>
</protein>
<comment type="function">
    <text evidence="1">DNA-dependent RNA polymerase catalyzes the transcription of DNA into RNA using the four ribonucleoside triphosphates as substrates.</text>
</comment>
<comment type="catalytic activity">
    <reaction evidence="1">
        <text>RNA(n) + a ribonucleoside 5'-triphosphate = RNA(n+1) + diphosphate</text>
        <dbReference type="Rhea" id="RHEA:21248"/>
        <dbReference type="Rhea" id="RHEA-COMP:14527"/>
        <dbReference type="Rhea" id="RHEA-COMP:17342"/>
        <dbReference type="ChEBI" id="CHEBI:33019"/>
        <dbReference type="ChEBI" id="CHEBI:61557"/>
        <dbReference type="ChEBI" id="CHEBI:140395"/>
        <dbReference type="EC" id="2.7.7.6"/>
    </reaction>
</comment>
<comment type="cofactor">
    <cofactor evidence="1">
        <name>Mg(2+)</name>
        <dbReference type="ChEBI" id="CHEBI:18420"/>
    </cofactor>
    <text evidence="1">Binds 1 Mg(2+) ion per subunit.</text>
</comment>
<comment type="cofactor">
    <cofactor evidence="1">
        <name>Zn(2+)</name>
        <dbReference type="ChEBI" id="CHEBI:29105"/>
    </cofactor>
    <text evidence="1">Binds 2 Zn(2+) ions per subunit.</text>
</comment>
<comment type="subunit">
    <text evidence="1">The RNAP catalytic core consists of 2 alpha, 1 beta, 1 beta' and 1 omega subunit. When a sigma factor is associated with the core the holoenzyme is formed, which can initiate transcription.</text>
</comment>
<comment type="similarity">
    <text evidence="1">Belongs to the RNA polymerase beta' chain family.</text>
</comment>
<keyword id="KW-0240">DNA-directed RNA polymerase</keyword>
<keyword id="KW-0460">Magnesium</keyword>
<keyword id="KW-0479">Metal-binding</keyword>
<keyword id="KW-0548">Nucleotidyltransferase</keyword>
<keyword id="KW-0804">Transcription</keyword>
<keyword id="KW-0808">Transferase</keyword>
<keyword id="KW-0862">Zinc</keyword>